<sequence length="194" mass="21012">MRTATITRTTKETTITISLNLDQQSGIQIATGIGFFDHMLDAFAKHGRFGLTVDAQGDLDVDPHHTIEDTGIVLGECFKQALGDKAGIERFGSAFVPMDESLARAVVDLSGRAYLVFDAELTNQRLGGFDTEVTEDFFQAVAFAGEFNLHASVLYGRNTHHKIEALFKALGRSLRAAVAINPEVQGIPSTKGVI</sequence>
<evidence type="ECO:0000255" key="1">
    <source>
        <dbReference type="HAMAP-Rule" id="MF_00076"/>
    </source>
</evidence>
<name>HIS7_LACCB</name>
<organism>
    <name type="scientific">Lacticaseibacillus casei (strain BL23)</name>
    <name type="common">Lactobacillus casei</name>
    <dbReference type="NCBI Taxonomy" id="543734"/>
    <lineage>
        <taxon>Bacteria</taxon>
        <taxon>Bacillati</taxon>
        <taxon>Bacillota</taxon>
        <taxon>Bacilli</taxon>
        <taxon>Lactobacillales</taxon>
        <taxon>Lactobacillaceae</taxon>
        <taxon>Lacticaseibacillus</taxon>
    </lineage>
</organism>
<keyword id="KW-0028">Amino-acid biosynthesis</keyword>
<keyword id="KW-0963">Cytoplasm</keyword>
<keyword id="KW-0368">Histidine biosynthesis</keyword>
<keyword id="KW-0456">Lyase</keyword>
<accession>B3WED4</accession>
<protein>
    <recommendedName>
        <fullName evidence="1">Imidazoleglycerol-phosphate dehydratase</fullName>
        <shortName evidence="1">IGPD</shortName>
        <ecNumber evidence="1">4.2.1.19</ecNumber>
    </recommendedName>
</protein>
<proteinExistence type="inferred from homology"/>
<reference key="1">
    <citation type="submission" date="2008-06" db="EMBL/GenBank/DDBJ databases">
        <title>Lactobacillus casei BL23 complete genome sequence.</title>
        <authorList>
            <person name="Maze A."/>
            <person name="Boel G."/>
            <person name="Bourand A."/>
            <person name="Loux V."/>
            <person name="Gibrat J.F."/>
            <person name="Zuniga M."/>
            <person name="Hartke A."/>
            <person name="Deutscher J."/>
        </authorList>
    </citation>
    <scope>NUCLEOTIDE SEQUENCE [LARGE SCALE GENOMIC DNA]</scope>
    <source>
        <strain>BL23</strain>
    </source>
</reference>
<comment type="catalytic activity">
    <reaction evidence="1">
        <text>D-erythro-1-(imidazol-4-yl)glycerol 3-phosphate = 3-(imidazol-4-yl)-2-oxopropyl phosphate + H2O</text>
        <dbReference type="Rhea" id="RHEA:11040"/>
        <dbReference type="ChEBI" id="CHEBI:15377"/>
        <dbReference type="ChEBI" id="CHEBI:57766"/>
        <dbReference type="ChEBI" id="CHEBI:58278"/>
        <dbReference type="EC" id="4.2.1.19"/>
    </reaction>
</comment>
<comment type="pathway">
    <text evidence="1">Amino-acid biosynthesis; L-histidine biosynthesis; L-histidine from 5-phospho-alpha-D-ribose 1-diphosphate: step 6/9.</text>
</comment>
<comment type="subcellular location">
    <subcellularLocation>
        <location evidence="1">Cytoplasm</location>
    </subcellularLocation>
</comment>
<comment type="similarity">
    <text evidence="1">Belongs to the imidazoleglycerol-phosphate dehydratase family.</text>
</comment>
<dbReference type="EC" id="4.2.1.19" evidence="1"/>
<dbReference type="EMBL" id="FM177140">
    <property type="protein sequence ID" value="CAQ66735.1"/>
    <property type="molecule type" value="Genomic_DNA"/>
</dbReference>
<dbReference type="SMR" id="B3WED4"/>
<dbReference type="KEGG" id="lcb:LCABL_16540"/>
<dbReference type="HOGENOM" id="CLU_044308_3_0_9"/>
<dbReference type="UniPathway" id="UPA00031">
    <property type="reaction ID" value="UER00011"/>
</dbReference>
<dbReference type="GO" id="GO:0005737">
    <property type="term" value="C:cytoplasm"/>
    <property type="evidence" value="ECO:0007669"/>
    <property type="project" value="UniProtKB-SubCell"/>
</dbReference>
<dbReference type="GO" id="GO:0004424">
    <property type="term" value="F:imidazoleglycerol-phosphate dehydratase activity"/>
    <property type="evidence" value="ECO:0007669"/>
    <property type="project" value="UniProtKB-UniRule"/>
</dbReference>
<dbReference type="GO" id="GO:0000105">
    <property type="term" value="P:L-histidine biosynthetic process"/>
    <property type="evidence" value="ECO:0007669"/>
    <property type="project" value="UniProtKB-UniRule"/>
</dbReference>
<dbReference type="CDD" id="cd07914">
    <property type="entry name" value="IGPD"/>
    <property type="match status" value="1"/>
</dbReference>
<dbReference type="FunFam" id="3.30.230.40:FF:000001">
    <property type="entry name" value="Imidazoleglycerol-phosphate dehydratase HisB"/>
    <property type="match status" value="1"/>
</dbReference>
<dbReference type="FunFam" id="3.30.230.40:FF:000003">
    <property type="entry name" value="Imidazoleglycerol-phosphate dehydratase HisB"/>
    <property type="match status" value="1"/>
</dbReference>
<dbReference type="Gene3D" id="3.30.230.40">
    <property type="entry name" value="Imidazole glycerol phosphate dehydratase, domain 1"/>
    <property type="match status" value="2"/>
</dbReference>
<dbReference type="HAMAP" id="MF_00076">
    <property type="entry name" value="HisB"/>
    <property type="match status" value="1"/>
</dbReference>
<dbReference type="InterPro" id="IPR038494">
    <property type="entry name" value="IGPD_sf"/>
</dbReference>
<dbReference type="InterPro" id="IPR000807">
    <property type="entry name" value="ImidazoleglycerolP_deHydtase"/>
</dbReference>
<dbReference type="InterPro" id="IPR020565">
    <property type="entry name" value="ImidazoleglycerP_deHydtase_CS"/>
</dbReference>
<dbReference type="InterPro" id="IPR020568">
    <property type="entry name" value="Ribosomal_Su5_D2-typ_SF"/>
</dbReference>
<dbReference type="NCBIfam" id="NF002107">
    <property type="entry name" value="PRK00951.1-2"/>
    <property type="match status" value="1"/>
</dbReference>
<dbReference type="NCBIfam" id="NF002111">
    <property type="entry name" value="PRK00951.2-1"/>
    <property type="match status" value="1"/>
</dbReference>
<dbReference type="NCBIfam" id="NF002114">
    <property type="entry name" value="PRK00951.2-4"/>
    <property type="match status" value="1"/>
</dbReference>
<dbReference type="PANTHER" id="PTHR23133:SF2">
    <property type="entry name" value="IMIDAZOLEGLYCEROL-PHOSPHATE DEHYDRATASE"/>
    <property type="match status" value="1"/>
</dbReference>
<dbReference type="PANTHER" id="PTHR23133">
    <property type="entry name" value="IMIDAZOLEGLYCEROL-PHOSPHATE DEHYDRATASE HIS7"/>
    <property type="match status" value="1"/>
</dbReference>
<dbReference type="Pfam" id="PF00475">
    <property type="entry name" value="IGPD"/>
    <property type="match status" value="1"/>
</dbReference>
<dbReference type="SUPFAM" id="SSF54211">
    <property type="entry name" value="Ribosomal protein S5 domain 2-like"/>
    <property type="match status" value="2"/>
</dbReference>
<dbReference type="PROSITE" id="PS00954">
    <property type="entry name" value="IGP_DEHYDRATASE_1"/>
    <property type="match status" value="1"/>
</dbReference>
<dbReference type="PROSITE" id="PS00955">
    <property type="entry name" value="IGP_DEHYDRATASE_2"/>
    <property type="match status" value="1"/>
</dbReference>
<feature type="chain" id="PRO_1000092696" description="Imidazoleglycerol-phosphate dehydratase">
    <location>
        <begin position="1"/>
        <end position="194"/>
    </location>
</feature>
<gene>
    <name evidence="1" type="primary">hisB</name>
    <name type="ordered locus">LCABL_16540</name>
</gene>